<reference key="1">
    <citation type="journal article" date="2002" name="Nature">
        <title>Comparison of the genomes of two Xanthomonas pathogens with differing host specificities.</title>
        <authorList>
            <person name="da Silva A.C.R."/>
            <person name="Ferro J.A."/>
            <person name="Reinach F.C."/>
            <person name="Farah C.S."/>
            <person name="Furlan L.R."/>
            <person name="Quaggio R.B."/>
            <person name="Monteiro-Vitorello C.B."/>
            <person name="Van Sluys M.A."/>
            <person name="Almeida N.F. Jr."/>
            <person name="Alves L.M.C."/>
            <person name="do Amaral A.M."/>
            <person name="Bertolini M.C."/>
            <person name="Camargo L.E.A."/>
            <person name="Camarotte G."/>
            <person name="Cannavan F."/>
            <person name="Cardozo J."/>
            <person name="Chambergo F."/>
            <person name="Ciapina L.P."/>
            <person name="Cicarelli R.M.B."/>
            <person name="Coutinho L.L."/>
            <person name="Cursino-Santos J.R."/>
            <person name="El-Dorry H."/>
            <person name="Faria J.B."/>
            <person name="Ferreira A.J.S."/>
            <person name="Ferreira R.C.C."/>
            <person name="Ferro M.I.T."/>
            <person name="Formighieri E.F."/>
            <person name="Franco M.C."/>
            <person name="Greggio C.C."/>
            <person name="Gruber A."/>
            <person name="Katsuyama A.M."/>
            <person name="Kishi L.T."/>
            <person name="Leite R.P."/>
            <person name="Lemos E.G.M."/>
            <person name="Lemos M.V.F."/>
            <person name="Locali E.C."/>
            <person name="Machado M.A."/>
            <person name="Madeira A.M.B.N."/>
            <person name="Martinez-Rossi N.M."/>
            <person name="Martins E.C."/>
            <person name="Meidanis J."/>
            <person name="Menck C.F.M."/>
            <person name="Miyaki C.Y."/>
            <person name="Moon D.H."/>
            <person name="Moreira L.M."/>
            <person name="Novo M.T.M."/>
            <person name="Okura V.K."/>
            <person name="Oliveira M.C."/>
            <person name="Oliveira V.R."/>
            <person name="Pereira H.A."/>
            <person name="Rossi A."/>
            <person name="Sena J.A.D."/>
            <person name="Silva C."/>
            <person name="de Souza R.F."/>
            <person name="Spinola L.A.F."/>
            <person name="Takita M.A."/>
            <person name="Tamura R.E."/>
            <person name="Teixeira E.C."/>
            <person name="Tezza R.I.D."/>
            <person name="Trindade dos Santos M."/>
            <person name="Truffi D."/>
            <person name="Tsai S.M."/>
            <person name="White F.F."/>
            <person name="Setubal J.C."/>
            <person name="Kitajima J.P."/>
        </authorList>
    </citation>
    <scope>NUCLEOTIDE SEQUENCE [LARGE SCALE GENOMIC DNA]</scope>
    <source>
        <strain>306</strain>
    </source>
</reference>
<keyword id="KW-0963">Cytoplasm</keyword>
<keyword id="KW-0489">Methyltransferase</keyword>
<keyword id="KW-0949">S-adenosyl-L-methionine</keyword>
<keyword id="KW-0808">Transferase</keyword>
<keyword id="KW-0819">tRNA processing</keyword>
<evidence type="ECO:0000250" key="1"/>
<evidence type="ECO:0000305" key="2"/>
<comment type="function">
    <text evidence="1">Specifically methylates guanosine-37 in various tRNAs.</text>
</comment>
<comment type="catalytic activity">
    <reaction>
        <text>guanosine(37) in tRNA + S-adenosyl-L-methionine = N(1)-methylguanosine(37) in tRNA + S-adenosyl-L-homocysteine + H(+)</text>
        <dbReference type="Rhea" id="RHEA:36899"/>
        <dbReference type="Rhea" id="RHEA-COMP:10145"/>
        <dbReference type="Rhea" id="RHEA-COMP:10147"/>
        <dbReference type="ChEBI" id="CHEBI:15378"/>
        <dbReference type="ChEBI" id="CHEBI:57856"/>
        <dbReference type="ChEBI" id="CHEBI:59789"/>
        <dbReference type="ChEBI" id="CHEBI:73542"/>
        <dbReference type="ChEBI" id="CHEBI:74269"/>
        <dbReference type="EC" id="2.1.1.228"/>
    </reaction>
</comment>
<comment type="subunit">
    <text evidence="1">Homodimer.</text>
</comment>
<comment type="subcellular location">
    <subcellularLocation>
        <location evidence="2">Cytoplasm</location>
    </subcellularLocation>
</comment>
<comment type="similarity">
    <text evidence="2">Belongs to the RNA methyltransferase TrmD family.</text>
</comment>
<dbReference type="EC" id="2.1.1.228"/>
<dbReference type="EMBL" id="AE008923">
    <property type="protein sequence ID" value="AAM36165.1"/>
    <property type="molecule type" value="Genomic_DNA"/>
</dbReference>
<dbReference type="RefSeq" id="WP_003484218.1">
    <property type="nucleotide sequence ID" value="NC_003919.1"/>
</dbReference>
<dbReference type="SMR" id="Q8PMY1"/>
<dbReference type="GeneID" id="66910464"/>
<dbReference type="KEGG" id="xac:XAC1294"/>
<dbReference type="eggNOG" id="COG0336">
    <property type="taxonomic scope" value="Bacteria"/>
</dbReference>
<dbReference type="HOGENOM" id="CLU_047363_0_1_6"/>
<dbReference type="Proteomes" id="UP000000576">
    <property type="component" value="Chromosome"/>
</dbReference>
<dbReference type="GO" id="GO:0005829">
    <property type="term" value="C:cytosol"/>
    <property type="evidence" value="ECO:0007669"/>
    <property type="project" value="TreeGrafter"/>
</dbReference>
<dbReference type="GO" id="GO:0052906">
    <property type="term" value="F:tRNA (guanine(37)-N1)-methyltransferase activity"/>
    <property type="evidence" value="ECO:0007669"/>
    <property type="project" value="UniProtKB-UniRule"/>
</dbReference>
<dbReference type="GO" id="GO:0002939">
    <property type="term" value="P:tRNA N1-guanine methylation"/>
    <property type="evidence" value="ECO:0007669"/>
    <property type="project" value="TreeGrafter"/>
</dbReference>
<dbReference type="CDD" id="cd18080">
    <property type="entry name" value="TrmD-like"/>
    <property type="match status" value="1"/>
</dbReference>
<dbReference type="FunFam" id="1.10.1270.20:FF:000001">
    <property type="entry name" value="tRNA (guanine-N(1)-)-methyltransferase"/>
    <property type="match status" value="1"/>
</dbReference>
<dbReference type="FunFam" id="3.40.1280.10:FF:000001">
    <property type="entry name" value="tRNA (guanine-N(1)-)-methyltransferase"/>
    <property type="match status" value="1"/>
</dbReference>
<dbReference type="Gene3D" id="3.40.1280.10">
    <property type="match status" value="1"/>
</dbReference>
<dbReference type="Gene3D" id="1.10.1270.20">
    <property type="entry name" value="tRNA(m1g37)methyltransferase, domain 2"/>
    <property type="match status" value="1"/>
</dbReference>
<dbReference type="HAMAP" id="MF_00605">
    <property type="entry name" value="TrmD"/>
    <property type="match status" value="1"/>
</dbReference>
<dbReference type="InterPro" id="IPR029028">
    <property type="entry name" value="Alpha/beta_knot_MTases"/>
</dbReference>
<dbReference type="InterPro" id="IPR023148">
    <property type="entry name" value="tRNA_m1G_MeTrfase_C_sf"/>
</dbReference>
<dbReference type="InterPro" id="IPR002649">
    <property type="entry name" value="tRNA_m1G_MeTrfase_TrmD"/>
</dbReference>
<dbReference type="InterPro" id="IPR029026">
    <property type="entry name" value="tRNA_m1G_MTases_N"/>
</dbReference>
<dbReference type="InterPro" id="IPR016009">
    <property type="entry name" value="tRNA_MeTrfase_TRMD/TRM10"/>
</dbReference>
<dbReference type="NCBIfam" id="NF000648">
    <property type="entry name" value="PRK00026.1"/>
    <property type="match status" value="1"/>
</dbReference>
<dbReference type="NCBIfam" id="TIGR00088">
    <property type="entry name" value="trmD"/>
    <property type="match status" value="1"/>
</dbReference>
<dbReference type="PANTHER" id="PTHR46417">
    <property type="entry name" value="TRNA (GUANINE-N(1)-)-METHYLTRANSFERASE"/>
    <property type="match status" value="1"/>
</dbReference>
<dbReference type="PANTHER" id="PTHR46417:SF1">
    <property type="entry name" value="TRNA (GUANINE-N(1)-)-METHYLTRANSFERASE"/>
    <property type="match status" value="1"/>
</dbReference>
<dbReference type="Pfam" id="PF01746">
    <property type="entry name" value="tRNA_m1G_MT"/>
    <property type="match status" value="1"/>
</dbReference>
<dbReference type="PIRSF" id="PIRSF000386">
    <property type="entry name" value="tRNA_mtase"/>
    <property type="match status" value="1"/>
</dbReference>
<dbReference type="SUPFAM" id="SSF75217">
    <property type="entry name" value="alpha/beta knot"/>
    <property type="match status" value="1"/>
</dbReference>
<accession>Q8PMY1</accession>
<proteinExistence type="inferred from homology"/>
<protein>
    <recommendedName>
        <fullName>tRNA (guanine-N(1)-)-methyltransferase</fullName>
        <ecNumber>2.1.1.228</ecNumber>
    </recommendedName>
    <alternativeName>
        <fullName>M1G-methyltransferase</fullName>
    </alternativeName>
    <alternativeName>
        <fullName>tRNA [GM37] methyltransferase</fullName>
    </alternativeName>
</protein>
<organism>
    <name type="scientific">Xanthomonas axonopodis pv. citri (strain 306)</name>
    <dbReference type="NCBI Taxonomy" id="190486"/>
    <lineage>
        <taxon>Bacteria</taxon>
        <taxon>Pseudomonadati</taxon>
        <taxon>Pseudomonadota</taxon>
        <taxon>Gammaproteobacteria</taxon>
        <taxon>Lysobacterales</taxon>
        <taxon>Lysobacteraceae</taxon>
        <taxon>Xanthomonas</taxon>
    </lineage>
</organism>
<gene>
    <name type="primary">trmD</name>
    <name type="ordered locus">XAC1294</name>
</gene>
<feature type="chain" id="PRO_0000060500" description="tRNA (guanine-N(1)-)-methyltransferase">
    <location>
        <begin position="1"/>
        <end position="252"/>
    </location>
</feature>
<feature type="binding site" evidence="1">
    <location>
        <position position="113"/>
    </location>
    <ligand>
        <name>S-adenosyl-L-methionine</name>
        <dbReference type="ChEBI" id="CHEBI:59789"/>
    </ligand>
</feature>
<feature type="binding site" evidence="1">
    <location>
        <begin position="133"/>
        <end position="138"/>
    </location>
    <ligand>
        <name>S-adenosyl-L-methionine</name>
        <dbReference type="ChEBI" id="CHEBI:59789"/>
    </ligand>
</feature>
<sequence length="252" mass="27811">MRIDVISLFPEFIAQCAAFGVVGRAQERGLLELQGWNPREHAQGNYRRVDDRPFGGGPGMVMLIEPLRACLDAVQAADARPAPVIYLSPQGRPLTQVLARELAQLPRMVLVCGRYEGVDERFLAQAVDMEISIGDYVLSGGELGAAVVVDVVARLQDGVLNDAESAAQDSFEGPQGLLDCPHYSHPATHAWGDVPDVLRSGNHAAIARWRRKQSLGRTWLRRPDLLDEAGLEKNDRRLLDEFRRELAPGDEK</sequence>
<name>TRMD_XANAC</name>